<feature type="chain" id="PRO_1000127879" description="ATP synthase epsilon chain">
    <location>
        <begin position="1"/>
        <end position="141"/>
    </location>
</feature>
<reference key="1">
    <citation type="journal article" date="2009" name="Genome Res.">
        <title>Newly introduced genomic prophage islands are critical determinants of in vivo competitiveness in the Liverpool epidemic strain of Pseudomonas aeruginosa.</title>
        <authorList>
            <person name="Winstanley C."/>
            <person name="Langille M.G.I."/>
            <person name="Fothergill J.L."/>
            <person name="Kukavica-Ibrulj I."/>
            <person name="Paradis-Bleau C."/>
            <person name="Sanschagrin F."/>
            <person name="Thomson N.R."/>
            <person name="Winsor G.L."/>
            <person name="Quail M.A."/>
            <person name="Lennard N."/>
            <person name="Bignell A."/>
            <person name="Clarke L."/>
            <person name="Seeger K."/>
            <person name="Saunders D."/>
            <person name="Harris D."/>
            <person name="Parkhill J."/>
            <person name="Hancock R.E.W."/>
            <person name="Brinkman F.S.L."/>
            <person name="Levesque R.C."/>
        </authorList>
    </citation>
    <scope>NUCLEOTIDE SEQUENCE [LARGE SCALE GENOMIC DNA]</scope>
    <source>
        <strain>LESB58</strain>
    </source>
</reference>
<gene>
    <name evidence="1" type="primary">atpC</name>
    <name type="ordered locus">PLES_59491</name>
</gene>
<dbReference type="EMBL" id="FM209186">
    <property type="protein sequence ID" value="CAW30703.1"/>
    <property type="molecule type" value="Genomic_DNA"/>
</dbReference>
<dbReference type="RefSeq" id="WP_003097128.1">
    <property type="nucleotide sequence ID" value="NC_011770.1"/>
</dbReference>
<dbReference type="SMR" id="B7V790"/>
<dbReference type="KEGG" id="pag:PLES_59491"/>
<dbReference type="HOGENOM" id="CLU_084338_2_0_6"/>
<dbReference type="GO" id="GO:0005886">
    <property type="term" value="C:plasma membrane"/>
    <property type="evidence" value="ECO:0007669"/>
    <property type="project" value="UniProtKB-SubCell"/>
</dbReference>
<dbReference type="GO" id="GO:0045259">
    <property type="term" value="C:proton-transporting ATP synthase complex"/>
    <property type="evidence" value="ECO:0007669"/>
    <property type="project" value="UniProtKB-KW"/>
</dbReference>
<dbReference type="GO" id="GO:0005524">
    <property type="term" value="F:ATP binding"/>
    <property type="evidence" value="ECO:0007669"/>
    <property type="project" value="UniProtKB-UniRule"/>
</dbReference>
<dbReference type="GO" id="GO:0046933">
    <property type="term" value="F:proton-transporting ATP synthase activity, rotational mechanism"/>
    <property type="evidence" value="ECO:0007669"/>
    <property type="project" value="UniProtKB-UniRule"/>
</dbReference>
<dbReference type="CDD" id="cd12152">
    <property type="entry name" value="F1-ATPase_delta"/>
    <property type="match status" value="1"/>
</dbReference>
<dbReference type="FunFam" id="2.60.15.10:FF:000001">
    <property type="entry name" value="ATP synthase epsilon chain"/>
    <property type="match status" value="1"/>
</dbReference>
<dbReference type="Gene3D" id="1.20.5.440">
    <property type="entry name" value="ATP synthase delta/epsilon subunit, C-terminal domain"/>
    <property type="match status" value="1"/>
</dbReference>
<dbReference type="Gene3D" id="2.60.15.10">
    <property type="entry name" value="F0F1 ATP synthase delta/epsilon subunit, N-terminal"/>
    <property type="match status" value="1"/>
</dbReference>
<dbReference type="HAMAP" id="MF_00530">
    <property type="entry name" value="ATP_synth_epsil_bac"/>
    <property type="match status" value="1"/>
</dbReference>
<dbReference type="InterPro" id="IPR036794">
    <property type="entry name" value="ATP_F1_dsu/esu_C_sf"/>
</dbReference>
<dbReference type="InterPro" id="IPR001469">
    <property type="entry name" value="ATP_synth_F1_dsu/esu"/>
</dbReference>
<dbReference type="InterPro" id="IPR020546">
    <property type="entry name" value="ATP_synth_F1_dsu/esu_N"/>
</dbReference>
<dbReference type="InterPro" id="IPR020547">
    <property type="entry name" value="ATP_synth_F1_esu_C"/>
</dbReference>
<dbReference type="InterPro" id="IPR036771">
    <property type="entry name" value="ATPsynth_dsu/esu_N"/>
</dbReference>
<dbReference type="NCBIfam" id="TIGR01216">
    <property type="entry name" value="ATP_synt_epsi"/>
    <property type="match status" value="1"/>
</dbReference>
<dbReference type="NCBIfam" id="NF001847">
    <property type="entry name" value="PRK00571.1-4"/>
    <property type="match status" value="1"/>
</dbReference>
<dbReference type="PANTHER" id="PTHR13822">
    <property type="entry name" value="ATP SYNTHASE DELTA/EPSILON CHAIN"/>
    <property type="match status" value="1"/>
</dbReference>
<dbReference type="PANTHER" id="PTHR13822:SF10">
    <property type="entry name" value="ATP SYNTHASE EPSILON CHAIN, CHLOROPLASTIC"/>
    <property type="match status" value="1"/>
</dbReference>
<dbReference type="Pfam" id="PF00401">
    <property type="entry name" value="ATP-synt_DE"/>
    <property type="match status" value="1"/>
</dbReference>
<dbReference type="Pfam" id="PF02823">
    <property type="entry name" value="ATP-synt_DE_N"/>
    <property type="match status" value="1"/>
</dbReference>
<dbReference type="SUPFAM" id="SSF46604">
    <property type="entry name" value="Epsilon subunit of F1F0-ATP synthase C-terminal domain"/>
    <property type="match status" value="1"/>
</dbReference>
<dbReference type="SUPFAM" id="SSF51344">
    <property type="entry name" value="Epsilon subunit of F1F0-ATP synthase N-terminal domain"/>
    <property type="match status" value="1"/>
</dbReference>
<organism>
    <name type="scientific">Pseudomonas aeruginosa (strain LESB58)</name>
    <dbReference type="NCBI Taxonomy" id="557722"/>
    <lineage>
        <taxon>Bacteria</taxon>
        <taxon>Pseudomonadati</taxon>
        <taxon>Pseudomonadota</taxon>
        <taxon>Gammaproteobacteria</taxon>
        <taxon>Pseudomonadales</taxon>
        <taxon>Pseudomonadaceae</taxon>
        <taxon>Pseudomonas</taxon>
    </lineage>
</organism>
<name>ATPE_PSEA8</name>
<proteinExistence type="inferred from homology"/>
<sequence>MAITVHCDIVSAEAEIFSGLVEMVIAHGALGDLGIAPGHAPLITDLKPGPIRLVKQGGEQEVYYISGGFLEVQPNMVKVLADTVVRAGDLDEAAAQEALKAAEKALQGKGAEFDYSAAAARLAEAAAQLRTVQQLRKKFGG</sequence>
<keyword id="KW-0066">ATP synthesis</keyword>
<keyword id="KW-0997">Cell inner membrane</keyword>
<keyword id="KW-1003">Cell membrane</keyword>
<keyword id="KW-0139">CF(1)</keyword>
<keyword id="KW-0375">Hydrogen ion transport</keyword>
<keyword id="KW-0406">Ion transport</keyword>
<keyword id="KW-0472">Membrane</keyword>
<keyword id="KW-0813">Transport</keyword>
<comment type="function">
    <text evidence="1">Produces ATP from ADP in the presence of a proton gradient across the membrane.</text>
</comment>
<comment type="subunit">
    <text evidence="1">F-type ATPases have 2 components, CF(1) - the catalytic core - and CF(0) - the membrane proton channel. CF(1) has five subunits: alpha(3), beta(3), gamma(1), delta(1), epsilon(1). CF(0) has three main subunits: a, b and c.</text>
</comment>
<comment type="subcellular location">
    <subcellularLocation>
        <location evidence="1">Cell inner membrane</location>
        <topology evidence="1">Peripheral membrane protein</topology>
    </subcellularLocation>
</comment>
<comment type="similarity">
    <text evidence="1">Belongs to the ATPase epsilon chain family.</text>
</comment>
<protein>
    <recommendedName>
        <fullName evidence="1">ATP synthase epsilon chain</fullName>
    </recommendedName>
    <alternativeName>
        <fullName evidence="1">ATP synthase F1 sector epsilon subunit</fullName>
    </alternativeName>
    <alternativeName>
        <fullName evidence="1">F-ATPase epsilon subunit</fullName>
    </alternativeName>
</protein>
<evidence type="ECO:0000255" key="1">
    <source>
        <dbReference type="HAMAP-Rule" id="MF_00530"/>
    </source>
</evidence>
<accession>B7V790</accession>